<reference key="1">
    <citation type="journal article" date="1992" name="Arch. Biochem. Biophys.">
        <title>Cloning and expression of the bovine cardiac sodium-calcium exchanger.</title>
        <authorList>
            <person name="Aceto J.F."/>
            <person name="Condrescu M."/>
            <person name="Kroupis C."/>
            <person name="Nelson H."/>
            <person name="Nelson N."/>
            <person name="Nicoll D.A."/>
            <person name="Philipson K.D."/>
            <person name="Reeves J.P."/>
        </authorList>
    </citation>
    <scope>NUCLEOTIDE SEQUENCE [MRNA]</scope>
    <scope>FUNCTION</scope>
    <scope>SUBCELLULAR LOCATION</scope>
    <source>
        <tissue>Heart</tissue>
    </source>
</reference>
<reference key="2">
    <citation type="journal article" date="1991" name="Arch. Biochem. Biophys.">
        <title>Purification and amino-terminal sequence of the bovine cardiac sodium-calcium exchanger: evidence for the presence of a signal sequence.</title>
        <authorList>
            <person name="Durkin J.T."/>
            <person name="Ahrens D.C."/>
            <person name="Pan Y.-C.E."/>
            <person name="Reeves J.P."/>
        </authorList>
    </citation>
    <scope>PROTEIN SEQUENCE OF 33-40 AND 42-44</scope>
    <source>
        <tissue>Heart</tissue>
    </source>
</reference>
<reference key="3">
    <citation type="journal article" date="1990" name="Biochemistry">
        <title>Identification of the sodium-calcium exchanger as the major ricin-binding glycoprotein of bovine rod outer segments and its localization to the plasma membrane.</title>
        <authorList>
            <person name="Reid D.M."/>
            <person name="Friedel U."/>
            <person name="Molday R.S."/>
            <person name="Cook N.J."/>
        </authorList>
    </citation>
    <scope>SUBCELLULAR LOCATION</scope>
    <source>
        <tissue>Retinal rod cell</tissue>
    </source>
</reference>
<reference key="4">
    <citation type="journal article" date="2013" name="Mol. Aspects Med.">
        <title>The SLC8 gene family of sodium-calcium exchangers (NCX) - structure, function, and regulation in health and disease.</title>
        <authorList>
            <person name="Khananshvili D."/>
        </authorList>
    </citation>
    <scope>REVIEW</scope>
</reference>
<keyword id="KW-0050">Antiport</keyword>
<keyword id="KW-0106">Calcium</keyword>
<keyword id="KW-0109">Calcium transport</keyword>
<keyword id="KW-0112">Calmodulin-binding</keyword>
<keyword id="KW-1003">Cell membrane</keyword>
<keyword id="KW-0903">Direct protein sequencing</keyword>
<keyword id="KW-0325">Glycoprotein</keyword>
<keyword id="KW-0406">Ion transport</keyword>
<keyword id="KW-0472">Membrane</keyword>
<keyword id="KW-0479">Metal-binding</keyword>
<keyword id="KW-0597">Phosphoprotein</keyword>
<keyword id="KW-1185">Reference proteome</keyword>
<keyword id="KW-0677">Repeat</keyword>
<keyword id="KW-0732">Signal</keyword>
<keyword id="KW-0915">Sodium</keyword>
<keyword id="KW-0739">Sodium transport</keyword>
<keyword id="KW-0812">Transmembrane</keyword>
<keyword id="KW-1133">Transmembrane helix</keyword>
<keyword id="KW-0813">Transport</keyword>
<protein>
    <recommendedName>
        <fullName>Sodium/calcium exchanger 1</fullName>
    </recommendedName>
    <alternativeName>
        <fullName>Na(+)/Ca(2+)-exchange protein 1</fullName>
    </alternativeName>
    <alternativeName>
        <fullName>Solute carrier family 8 member 1</fullName>
    </alternativeName>
</protein>
<dbReference type="EMBL" id="L06438">
    <property type="protein sequence ID" value="AAA30509.1"/>
    <property type="molecule type" value="mRNA"/>
</dbReference>
<dbReference type="PIR" id="S27114">
    <property type="entry name" value="S27114"/>
</dbReference>
<dbReference type="RefSeq" id="NP_788805.1">
    <property type="nucleotide sequence ID" value="NM_176632.2"/>
</dbReference>
<dbReference type="SMR" id="P48765"/>
<dbReference type="FunCoup" id="P48765">
    <property type="interactions" value="476"/>
</dbReference>
<dbReference type="STRING" id="9913.ENSBTAP00000022795"/>
<dbReference type="TCDB" id="2.A.19.3.1">
    <property type="family name" value="the ca(2+):cation antiporter (caca) family"/>
</dbReference>
<dbReference type="GlyCosmos" id="P48765">
    <property type="glycosylation" value="2 sites, No reported glycans"/>
</dbReference>
<dbReference type="GlyGen" id="P48765">
    <property type="glycosylation" value="2 sites"/>
</dbReference>
<dbReference type="PaxDb" id="9913-ENSBTAP00000022795"/>
<dbReference type="GeneID" id="337925"/>
<dbReference type="KEGG" id="bta:337925"/>
<dbReference type="CTD" id="6546"/>
<dbReference type="eggNOG" id="KOG1306">
    <property type="taxonomic scope" value="Eukaryota"/>
</dbReference>
<dbReference type="InParanoid" id="P48765"/>
<dbReference type="OrthoDB" id="418484at2759"/>
<dbReference type="Proteomes" id="UP000009136">
    <property type="component" value="Unplaced"/>
</dbReference>
<dbReference type="GO" id="GO:0030424">
    <property type="term" value="C:axon"/>
    <property type="evidence" value="ECO:0000318"/>
    <property type="project" value="GO_Central"/>
</dbReference>
<dbReference type="GO" id="GO:0005901">
    <property type="term" value="C:caveola"/>
    <property type="evidence" value="ECO:0000314"/>
    <property type="project" value="BHF-UCL"/>
</dbReference>
<dbReference type="GO" id="GO:0005886">
    <property type="term" value="C:plasma membrane"/>
    <property type="evidence" value="ECO:0000250"/>
    <property type="project" value="UniProtKB"/>
</dbReference>
<dbReference type="GO" id="GO:0098794">
    <property type="term" value="C:postsynapse"/>
    <property type="evidence" value="ECO:0000318"/>
    <property type="project" value="GO_Central"/>
</dbReference>
<dbReference type="GO" id="GO:0042383">
    <property type="term" value="C:sarcolemma"/>
    <property type="evidence" value="ECO:0000250"/>
    <property type="project" value="AgBase"/>
</dbReference>
<dbReference type="GO" id="GO:0005509">
    <property type="term" value="F:calcium ion binding"/>
    <property type="evidence" value="ECO:0000250"/>
    <property type="project" value="UniProtKB"/>
</dbReference>
<dbReference type="GO" id="GO:0005432">
    <property type="term" value="F:calcium:sodium antiporter activity"/>
    <property type="evidence" value="ECO:0000250"/>
    <property type="project" value="UniProtKB"/>
</dbReference>
<dbReference type="GO" id="GO:0005516">
    <property type="term" value="F:calmodulin binding"/>
    <property type="evidence" value="ECO:0007669"/>
    <property type="project" value="UniProtKB-KW"/>
</dbReference>
<dbReference type="GO" id="GO:0098703">
    <property type="term" value="P:calcium ion import across plasma membrane"/>
    <property type="evidence" value="ECO:0000318"/>
    <property type="project" value="GO_Central"/>
</dbReference>
<dbReference type="GO" id="GO:0070588">
    <property type="term" value="P:calcium ion transmembrane transport"/>
    <property type="evidence" value="ECO:0000250"/>
    <property type="project" value="UniProtKB"/>
</dbReference>
<dbReference type="GO" id="GO:0006816">
    <property type="term" value="P:calcium ion transport"/>
    <property type="evidence" value="ECO:0000250"/>
    <property type="project" value="AgBase"/>
</dbReference>
<dbReference type="GO" id="GO:0007154">
    <property type="term" value="P:cell communication"/>
    <property type="evidence" value="ECO:0007669"/>
    <property type="project" value="InterPro"/>
</dbReference>
<dbReference type="GO" id="GO:0006874">
    <property type="term" value="P:intracellular calcium ion homeostasis"/>
    <property type="evidence" value="ECO:0000250"/>
    <property type="project" value="AgBase"/>
</dbReference>
<dbReference type="GO" id="GO:0007204">
    <property type="term" value="P:positive regulation of cytosolic calcium ion concentration"/>
    <property type="evidence" value="ECO:0000250"/>
    <property type="project" value="AgBase"/>
</dbReference>
<dbReference type="GO" id="GO:0051924">
    <property type="term" value="P:regulation of calcium ion transport"/>
    <property type="evidence" value="ECO:0000250"/>
    <property type="project" value="AgBase"/>
</dbReference>
<dbReference type="GO" id="GO:0002028">
    <property type="term" value="P:regulation of sodium ion transport"/>
    <property type="evidence" value="ECO:0000250"/>
    <property type="project" value="AgBase"/>
</dbReference>
<dbReference type="GO" id="GO:0002026">
    <property type="term" value="P:regulation of the force of heart contraction"/>
    <property type="evidence" value="ECO:0000250"/>
    <property type="project" value="AgBase"/>
</dbReference>
<dbReference type="GO" id="GO:0035725">
    <property type="term" value="P:sodium ion transmembrane transport"/>
    <property type="evidence" value="ECO:0000250"/>
    <property type="project" value="UniProtKB"/>
</dbReference>
<dbReference type="GO" id="GO:0006814">
    <property type="term" value="P:sodium ion transport"/>
    <property type="evidence" value="ECO:0000250"/>
    <property type="project" value="AgBase"/>
</dbReference>
<dbReference type="FunFam" id="1.20.1420.30:FF:000001">
    <property type="entry name" value="sodium/calcium exchanger 1 isoform X1"/>
    <property type="match status" value="1"/>
</dbReference>
<dbReference type="FunFam" id="1.20.1420.30:FF:000003">
    <property type="entry name" value="sodium/calcium exchanger 1 isoform X1"/>
    <property type="match status" value="1"/>
</dbReference>
<dbReference type="FunFam" id="2.60.40.2030:FF:000001">
    <property type="entry name" value="sodium/calcium exchanger 1 isoform X1"/>
    <property type="match status" value="1"/>
</dbReference>
<dbReference type="Gene3D" id="2.60.40.2030">
    <property type="match status" value="2"/>
</dbReference>
<dbReference type="Gene3D" id="1.20.1420.30">
    <property type="entry name" value="NCX, central ion-binding region"/>
    <property type="match status" value="2"/>
</dbReference>
<dbReference type="InterPro" id="IPR051171">
    <property type="entry name" value="CaCA"/>
</dbReference>
<dbReference type="InterPro" id="IPR038081">
    <property type="entry name" value="CalX-like_sf"/>
</dbReference>
<dbReference type="InterPro" id="IPR003644">
    <property type="entry name" value="Calx_beta"/>
</dbReference>
<dbReference type="InterPro" id="IPR001623">
    <property type="entry name" value="DnaJ_domain"/>
</dbReference>
<dbReference type="InterPro" id="IPR004836">
    <property type="entry name" value="Na_Ca_Ex"/>
</dbReference>
<dbReference type="InterPro" id="IPR032452">
    <property type="entry name" value="Na_Ca_Ex_C-exten"/>
</dbReference>
<dbReference type="InterPro" id="IPR002987">
    <property type="entry name" value="NaCa_exhngr1"/>
</dbReference>
<dbReference type="InterPro" id="IPR004837">
    <property type="entry name" value="NaCa_Exmemb"/>
</dbReference>
<dbReference type="InterPro" id="IPR044880">
    <property type="entry name" value="NCX_ion-bd_dom_sf"/>
</dbReference>
<dbReference type="NCBIfam" id="TIGR00845">
    <property type="entry name" value="caca"/>
    <property type="match status" value="1"/>
</dbReference>
<dbReference type="PANTHER" id="PTHR11878">
    <property type="entry name" value="SODIUM/CALCIUM EXCHANGER"/>
    <property type="match status" value="1"/>
</dbReference>
<dbReference type="PANTHER" id="PTHR11878:SF6">
    <property type="entry name" value="SODIUM_CALCIUM EXCHANGER 1"/>
    <property type="match status" value="1"/>
</dbReference>
<dbReference type="Pfam" id="PF03160">
    <property type="entry name" value="Calx-beta"/>
    <property type="match status" value="1"/>
</dbReference>
<dbReference type="Pfam" id="PF01699">
    <property type="entry name" value="Na_Ca_ex"/>
    <property type="match status" value="2"/>
</dbReference>
<dbReference type="Pfam" id="PF16494">
    <property type="entry name" value="Na_Ca_ex_C"/>
    <property type="match status" value="1"/>
</dbReference>
<dbReference type="PRINTS" id="PR01259">
    <property type="entry name" value="NACAEXCHNGR"/>
</dbReference>
<dbReference type="PRINTS" id="PR01260">
    <property type="entry name" value="NACAEXCHNGR1"/>
</dbReference>
<dbReference type="SMART" id="SM00237">
    <property type="entry name" value="Calx_beta"/>
    <property type="match status" value="2"/>
</dbReference>
<dbReference type="SUPFAM" id="SSF141072">
    <property type="entry name" value="CalX-like"/>
    <property type="match status" value="2"/>
</dbReference>
<accession>P48765</accession>
<name>NAC1_BOVIN</name>
<feature type="signal peptide" evidence="7">
    <location>
        <begin position="1"/>
        <end position="32"/>
    </location>
</feature>
<feature type="chain" id="PRO_0000019375" description="Sodium/calcium exchanger 1">
    <location>
        <begin position="33"/>
        <end position="970"/>
    </location>
</feature>
<feature type="topological domain" description="Extracellular" evidence="5">
    <location>
        <begin position="33"/>
        <end position="71"/>
    </location>
</feature>
<feature type="transmembrane region" description="Helical" evidence="5">
    <location>
        <begin position="72"/>
        <end position="92"/>
    </location>
</feature>
<feature type="topological domain" description="Cytoplasmic" evidence="5">
    <location>
        <begin position="93"/>
        <end position="133"/>
    </location>
</feature>
<feature type="transmembrane region" description="Helical" evidence="5">
    <location>
        <begin position="134"/>
        <end position="154"/>
    </location>
</feature>
<feature type="topological domain" description="Extracellular" evidence="5">
    <location>
        <begin position="155"/>
        <end position="167"/>
    </location>
</feature>
<feature type="transmembrane region" description="Helical" evidence="5">
    <location>
        <begin position="168"/>
        <end position="188"/>
    </location>
</feature>
<feature type="topological domain" description="Cytoplasmic" evidence="5">
    <location>
        <begin position="189"/>
        <end position="201"/>
    </location>
</feature>
<feature type="transmembrane region" description="Helical" evidence="5">
    <location>
        <begin position="202"/>
        <end position="222"/>
    </location>
</feature>
<feature type="topological domain" description="Extracellular" evidence="5">
    <location>
        <begin position="223"/>
        <end position="228"/>
    </location>
</feature>
<feature type="transmembrane region" description="Helical" evidence="5">
    <location>
        <begin position="229"/>
        <end position="249"/>
    </location>
</feature>
<feature type="topological domain" description="Cytoplasmic" evidence="5">
    <location>
        <begin position="250"/>
        <end position="797"/>
    </location>
</feature>
<feature type="transmembrane region" description="Helical" evidence="5">
    <location>
        <begin position="798"/>
        <end position="818"/>
    </location>
</feature>
<feature type="topological domain" description="Extracellular" evidence="5">
    <location>
        <begin position="819"/>
        <end position="821"/>
    </location>
</feature>
<feature type="transmembrane region" description="Helical" evidence="5">
    <location>
        <begin position="822"/>
        <end position="842"/>
    </location>
</feature>
<feature type="topological domain" description="Cytoplasmic" evidence="5">
    <location>
        <begin position="843"/>
        <end position="871"/>
    </location>
</feature>
<feature type="transmembrane region" description="Helical" evidence="5">
    <location>
        <begin position="872"/>
        <end position="892"/>
    </location>
</feature>
<feature type="topological domain" description="Extracellular" evidence="5">
    <location>
        <begin position="893"/>
        <end position="903"/>
    </location>
</feature>
<feature type="transmembrane region" description="Helical" evidence="5">
    <location>
        <begin position="904"/>
        <end position="924"/>
    </location>
</feature>
<feature type="topological domain" description="Cytoplasmic" evidence="5">
    <location>
        <begin position="925"/>
        <end position="941"/>
    </location>
</feature>
<feature type="transmembrane region" description="Helical" evidence="5">
    <location>
        <begin position="942"/>
        <end position="962"/>
    </location>
</feature>
<feature type="topological domain" description="Extracellular" evidence="5">
    <location>
        <begin position="963"/>
        <end position="970"/>
    </location>
</feature>
<feature type="repeat" description="Alpha-1">
    <location>
        <begin position="138"/>
        <end position="178"/>
    </location>
</feature>
<feature type="domain" description="Calx-beta 1">
    <location>
        <begin position="393"/>
        <end position="493"/>
    </location>
</feature>
<feature type="domain" description="Calx-beta 2">
    <location>
        <begin position="524"/>
        <end position="624"/>
    </location>
</feature>
<feature type="repeat" description="Alpha-2">
    <location>
        <begin position="839"/>
        <end position="875"/>
    </location>
</feature>
<feature type="region of interest" description="Putative calmodulin-binding region" evidence="1">
    <location>
        <begin position="251"/>
        <end position="270"/>
    </location>
</feature>
<feature type="binding site" evidence="1">
    <location>
        <position position="417"/>
    </location>
    <ligand>
        <name>Ca(2+)</name>
        <dbReference type="ChEBI" id="CHEBI:29108"/>
        <label>1</label>
    </ligand>
</feature>
<feature type="binding site" evidence="1">
    <location>
        <position position="417"/>
    </location>
    <ligand>
        <name>Ca(2+)</name>
        <dbReference type="ChEBI" id="CHEBI:29108"/>
        <label>2</label>
    </ligand>
</feature>
<feature type="binding site" evidence="1">
    <location>
        <position position="417"/>
    </location>
    <ligand>
        <name>Ca(2+)</name>
        <dbReference type="ChEBI" id="CHEBI:29108"/>
        <label>3</label>
    </ligand>
</feature>
<feature type="binding site" evidence="1">
    <location>
        <position position="453"/>
    </location>
    <ligand>
        <name>Ca(2+)</name>
        <dbReference type="ChEBI" id="CHEBI:29108"/>
        <label>1</label>
    </ligand>
</feature>
<feature type="binding site" evidence="1">
    <location>
        <position position="453"/>
    </location>
    <ligand>
        <name>Ca(2+)</name>
        <dbReference type="ChEBI" id="CHEBI:29108"/>
        <label>4</label>
    </ligand>
</feature>
<feature type="binding site" evidence="1">
    <location>
        <position position="478"/>
    </location>
    <ligand>
        <name>Ca(2+)</name>
        <dbReference type="ChEBI" id="CHEBI:29108"/>
        <label>2</label>
    </ligand>
</feature>
<feature type="binding site" evidence="1">
    <location>
        <position position="479"/>
    </location>
    <ligand>
        <name>Ca(2+)</name>
        <dbReference type="ChEBI" id="CHEBI:29108"/>
        <label>1</label>
    </ligand>
</feature>
<feature type="binding site" evidence="1">
    <location>
        <position position="479"/>
    </location>
    <ligand>
        <name>Ca(2+)</name>
        <dbReference type="ChEBI" id="CHEBI:29108"/>
        <label>2</label>
    </ligand>
</feature>
<feature type="binding site" evidence="1">
    <location>
        <position position="479"/>
    </location>
    <ligand>
        <name>Ca(2+)</name>
        <dbReference type="ChEBI" id="CHEBI:29108"/>
        <label>3</label>
    </ligand>
</feature>
<feature type="binding site" evidence="1">
    <location>
        <position position="479"/>
    </location>
    <ligand>
        <name>Ca(2+)</name>
        <dbReference type="ChEBI" id="CHEBI:29108"/>
        <label>4</label>
    </ligand>
</feature>
<feature type="binding site" evidence="1">
    <location>
        <position position="481"/>
    </location>
    <ligand>
        <name>Ca(2+)</name>
        <dbReference type="ChEBI" id="CHEBI:29108"/>
        <label>3</label>
    </ligand>
</feature>
<feature type="binding site" evidence="1">
    <location>
        <position position="483"/>
    </location>
    <ligand>
        <name>Ca(2+)</name>
        <dbReference type="ChEBI" id="CHEBI:29108"/>
        <label>1</label>
    </ligand>
</feature>
<feature type="binding site" evidence="1">
    <location>
        <position position="483"/>
    </location>
    <ligand>
        <name>Ca(2+)</name>
        <dbReference type="ChEBI" id="CHEBI:29108"/>
        <label>3</label>
    </ligand>
</feature>
<feature type="binding site" evidence="1">
    <location>
        <position position="483"/>
    </location>
    <ligand>
        <name>Ca(2+)</name>
        <dbReference type="ChEBI" id="CHEBI:29108"/>
        <label>4</label>
    </ligand>
</feature>
<feature type="binding site" evidence="1">
    <location>
        <position position="486"/>
    </location>
    <ligand>
        <name>Ca(2+)</name>
        <dbReference type="ChEBI" id="CHEBI:29108"/>
        <label>4</label>
    </ligand>
</feature>
<feature type="binding site" evidence="1">
    <location>
        <position position="530"/>
    </location>
    <ligand>
        <name>Ca(2+)</name>
        <dbReference type="ChEBI" id="CHEBI:29108"/>
        <label>3</label>
    </ligand>
</feature>
<feature type="binding site" evidence="1">
    <location>
        <position position="531"/>
    </location>
    <ligand>
        <name>Ca(2+)</name>
        <dbReference type="ChEBI" id="CHEBI:29108"/>
        <label>2</label>
    </ligand>
</feature>
<feature type="binding site" evidence="1">
    <location>
        <position position="532"/>
    </location>
    <ligand>
        <name>Ca(2+)</name>
        <dbReference type="ChEBI" id="CHEBI:29108"/>
        <label>2</label>
    </ligand>
</feature>
<feature type="binding site" evidence="1">
    <location>
        <position position="532"/>
    </location>
    <ligand>
        <name>Ca(2+)</name>
        <dbReference type="ChEBI" id="CHEBI:29108"/>
        <label>3</label>
    </ligand>
</feature>
<feature type="binding site" evidence="1">
    <location>
        <position position="548"/>
    </location>
    <ligand>
        <name>Ca(2+)</name>
        <dbReference type="ChEBI" id="CHEBI:29108"/>
        <label>5</label>
    </ligand>
</feature>
<feature type="binding site" evidence="1">
    <location>
        <position position="584"/>
    </location>
    <ligand>
        <name>Ca(2+)</name>
        <dbReference type="ChEBI" id="CHEBI:29108"/>
        <label>6</label>
    </ligand>
</feature>
<feature type="binding site" evidence="1">
    <location>
        <position position="610"/>
    </location>
    <ligand>
        <name>Ca(2+)</name>
        <dbReference type="ChEBI" id="CHEBI:29108"/>
        <label>5</label>
    </ligand>
</feature>
<feature type="binding site" evidence="1">
    <location>
        <position position="610"/>
    </location>
    <ligand>
        <name>Ca(2+)</name>
        <dbReference type="ChEBI" id="CHEBI:29108"/>
        <label>6</label>
    </ligand>
</feature>
<feature type="binding site" evidence="1">
    <location>
        <position position="611"/>
    </location>
    <ligand>
        <name>Ca(2+)</name>
        <dbReference type="ChEBI" id="CHEBI:29108"/>
        <label>6</label>
    </ligand>
</feature>
<feature type="binding site" evidence="1">
    <location>
        <position position="612"/>
    </location>
    <ligand>
        <name>Ca(2+)</name>
        <dbReference type="ChEBI" id="CHEBI:29108"/>
        <label>5</label>
    </ligand>
</feature>
<feature type="binding site" evidence="1">
    <location>
        <position position="612"/>
    </location>
    <ligand>
        <name>Ca(2+)</name>
        <dbReference type="ChEBI" id="CHEBI:29108"/>
        <label>6</label>
    </ligand>
</feature>
<feature type="binding site" evidence="1">
    <location>
        <position position="715"/>
    </location>
    <ligand>
        <name>Ca(2+)</name>
        <dbReference type="ChEBI" id="CHEBI:29108"/>
        <label>5</label>
    </ligand>
</feature>
<feature type="modified residue" description="Phosphoserine" evidence="3">
    <location>
        <position position="282"/>
    </location>
</feature>
<feature type="modified residue" description="Phosphoserine" evidence="3 5">
    <location>
        <position position="389"/>
    </location>
</feature>
<feature type="glycosylation site" description="N-linked (GlcNAc...) asparagine" evidence="5">
    <location>
        <position position="41"/>
    </location>
</feature>
<feature type="glycosylation site" description="N-linked (GlcNAc...) asparagine" evidence="5">
    <location>
        <position position="157"/>
    </location>
</feature>
<evidence type="ECO:0000250" key="1">
    <source>
        <dbReference type="UniProtKB" id="P23685"/>
    </source>
</evidence>
<evidence type="ECO:0000250" key="2">
    <source>
        <dbReference type="UniProtKB" id="P32418"/>
    </source>
</evidence>
<evidence type="ECO:0000250" key="3">
    <source>
        <dbReference type="UniProtKB" id="P70414"/>
    </source>
</evidence>
<evidence type="ECO:0000250" key="4">
    <source>
        <dbReference type="UniProtKB" id="Q01728"/>
    </source>
</evidence>
<evidence type="ECO:0000255" key="5"/>
<evidence type="ECO:0000269" key="6">
    <source>
    </source>
</evidence>
<evidence type="ECO:0000269" key="7">
    <source>
    </source>
</evidence>
<evidence type="ECO:0000269" key="8">
    <source>
    </source>
</evidence>
<evidence type="ECO:0000305" key="9"/>
<comment type="function">
    <text evidence="3 6">Mediates the exchange of one Ca(2+) ion against three to four Na(+) ions across the cell membrane, and thereby contributes to the regulation of cytoplasmic Ca(2+) levels and Ca(2+)-dependent cellular processes (PubMed:1416984). Contributes to Ca(2+) transport during excitation-contraction coupling in muscle. In a first phase, voltage-gated channels mediate the rapid increase of cytoplasmic Ca(2+) levels due to release of Ca(2+) stores from the endoplasmic reticulum. SLC8A1 mediates the export of Ca(2+) from the cell during the next phase, so that cytoplasmic Ca(2+) levels rapidly return to baseline. Required for normal embryonic heart development and the onset of heart contractions.</text>
</comment>
<comment type="catalytic activity">
    <reaction evidence="2">
        <text>Ca(2+)(in) + 3 Na(+)(out) = Ca(2+)(out) + 3 Na(+)(in)</text>
        <dbReference type="Rhea" id="RHEA:69955"/>
        <dbReference type="ChEBI" id="CHEBI:29101"/>
        <dbReference type="ChEBI" id="CHEBI:29108"/>
    </reaction>
</comment>
<comment type="activity regulation">
    <text evidence="4">Activated by micromolar levels of Ca(2+).</text>
</comment>
<comment type="subcellular location">
    <subcellularLocation>
        <location evidence="6 8">Cell membrane</location>
        <topology evidence="8">Multi-pass membrane protein</topology>
    </subcellularLocation>
</comment>
<comment type="domain">
    <text evidence="1">The cytoplasmic Calx-beta domains bind the regulatory Ca(2+). The first Calx-beta domain can bind up to four Ca(2+) ions. The second domain can bind another two Ca(2+) ions that are essential for calcium-regulated ion exchange.</text>
</comment>
<comment type="similarity">
    <text evidence="9">Belongs to the Ca(2+):cation antiporter (CaCA) (TC 2.A.19) family. SLC8 subfamily.</text>
</comment>
<proteinExistence type="evidence at protein level"/>
<sequence>MLQFSLSPTLSMGFHVIAMVALLFSHVDHISAETEMEGEGNETGECTGSYYCKKGVILPIWEPQDPSFGDKIARATVYFVAMVYMFLGVSIIADRFMSSIEVITSQEKEITIKKPNGETTKTTVRIWNETVSNLTLMALGSSAPEILLSVIEVCGHNFTAGDLGPSTIVGSAAFNMFIIIALCVYVVPDGETRKIKHLRVFFVTAAWSIFAYTWLYIILSVSSPGVVEVWEGLLTFFFFPICVVFAWVADRRLLFYKYVYKRYRAGKQRGMIIEHEGDRPSSKTEIEMDGKVVNSHVDSFLDGALVLEVDERDQDDEEARREMARILKELKQKHPEKEIEQLIELANYQVLSQQQKSRAFYRIQATRLMTGAGNILKRHAADQARKAVSMHEVNTEVAENDPVSKIFFEQGTYQCLENCGTVALTIIRRGGDLTNTVFVDFRTEDGTANAGSDYEFTEGTVVFKPGETQKEIRVGIIDDDIFEEDENFLVHLSNVKVSLEASEDGILEASHVSTLACLGSPSTATVTIFDDDHAGIFTFEEPVTHVSESIGIMEVKVLRTSGARGNVIVPYKTIEGTARGGGEDFEDTCGELEFQNDEIVKTISVKVIDDEEYEKNKTFFLEIGEPRLVEMSEKKALLLNELGGFTITGKYLYGQPVFRKVHAREHPLPSTIITIADEYDDKQPLTSKEEEERRIAEMGRPILGEHTRLEVIIEESYEFKSTVDKLIKKTNLALVVGTNSWREQFIEAITVSAGEDDDDDECGEEKLPSCFDYVMHFLTVFWKVLFAFVPPTEYWNGWACFIVSILMIGLLTAFIGDLASHFACTIALKDSVTAVVFVALGTSVPDTFASKVAATQDQYADASIGNVTGSNAVNVFLGIGVAWSIAAIYHAANGEQFKVSPGTLAFSVTLFTIFAFINVGVLLYRRRPEIGGELGGPRTAKLLTSCLFVLLWLLYIFFSSLEAYCHIKGF</sequence>
<organism>
    <name type="scientific">Bos taurus</name>
    <name type="common">Bovine</name>
    <dbReference type="NCBI Taxonomy" id="9913"/>
    <lineage>
        <taxon>Eukaryota</taxon>
        <taxon>Metazoa</taxon>
        <taxon>Chordata</taxon>
        <taxon>Craniata</taxon>
        <taxon>Vertebrata</taxon>
        <taxon>Euteleostomi</taxon>
        <taxon>Mammalia</taxon>
        <taxon>Eutheria</taxon>
        <taxon>Laurasiatheria</taxon>
        <taxon>Artiodactyla</taxon>
        <taxon>Ruminantia</taxon>
        <taxon>Pecora</taxon>
        <taxon>Bovidae</taxon>
        <taxon>Bovinae</taxon>
        <taxon>Bos</taxon>
    </lineage>
</organism>
<gene>
    <name type="primary">SLC8A1</name>
</gene>